<organism>
    <name type="scientific">Coprothermobacter proteolyticus (strain ATCC 35245 / DSM 5265 / OCM 4 / BT)</name>
    <dbReference type="NCBI Taxonomy" id="309798"/>
    <lineage>
        <taxon>Bacteria</taxon>
        <taxon>Pseudomonadati</taxon>
        <taxon>Coprothermobacterota</taxon>
        <taxon>Coprothermobacteria</taxon>
        <taxon>Coprothermobacterales</taxon>
        <taxon>Coprothermobacteraceae</taxon>
        <taxon>Coprothermobacter</taxon>
    </lineage>
</organism>
<keyword id="KW-0030">Aminoacyl-tRNA synthetase</keyword>
<keyword id="KW-0067">ATP-binding</keyword>
<keyword id="KW-0963">Cytoplasm</keyword>
<keyword id="KW-0436">Ligase</keyword>
<keyword id="KW-0547">Nucleotide-binding</keyword>
<keyword id="KW-0648">Protein biosynthesis</keyword>
<keyword id="KW-1185">Reference proteome</keyword>
<dbReference type="EC" id="6.1.1.11" evidence="1"/>
<dbReference type="EMBL" id="CP001145">
    <property type="protein sequence ID" value="ACI17674.1"/>
    <property type="molecule type" value="Genomic_DNA"/>
</dbReference>
<dbReference type="RefSeq" id="WP_012544326.1">
    <property type="nucleotide sequence ID" value="NC_011295.1"/>
</dbReference>
<dbReference type="SMR" id="B5Y8D8"/>
<dbReference type="STRING" id="309798.COPRO5265_0687"/>
<dbReference type="KEGG" id="cpo:COPRO5265_0687"/>
<dbReference type="eggNOG" id="COG0172">
    <property type="taxonomic scope" value="Bacteria"/>
</dbReference>
<dbReference type="HOGENOM" id="CLU_023797_1_1_9"/>
<dbReference type="OrthoDB" id="9804647at2"/>
<dbReference type="UniPathway" id="UPA00906">
    <property type="reaction ID" value="UER00895"/>
</dbReference>
<dbReference type="Proteomes" id="UP000001732">
    <property type="component" value="Chromosome"/>
</dbReference>
<dbReference type="GO" id="GO:0005737">
    <property type="term" value="C:cytoplasm"/>
    <property type="evidence" value="ECO:0007669"/>
    <property type="project" value="UniProtKB-SubCell"/>
</dbReference>
<dbReference type="GO" id="GO:0005524">
    <property type="term" value="F:ATP binding"/>
    <property type="evidence" value="ECO:0007669"/>
    <property type="project" value="UniProtKB-UniRule"/>
</dbReference>
<dbReference type="GO" id="GO:0004828">
    <property type="term" value="F:serine-tRNA ligase activity"/>
    <property type="evidence" value="ECO:0007669"/>
    <property type="project" value="UniProtKB-UniRule"/>
</dbReference>
<dbReference type="GO" id="GO:0016260">
    <property type="term" value="P:selenocysteine biosynthetic process"/>
    <property type="evidence" value="ECO:0007669"/>
    <property type="project" value="UniProtKB-UniRule"/>
</dbReference>
<dbReference type="GO" id="GO:0006434">
    <property type="term" value="P:seryl-tRNA aminoacylation"/>
    <property type="evidence" value="ECO:0007669"/>
    <property type="project" value="UniProtKB-UniRule"/>
</dbReference>
<dbReference type="CDD" id="cd00770">
    <property type="entry name" value="SerRS_core"/>
    <property type="match status" value="1"/>
</dbReference>
<dbReference type="Gene3D" id="3.30.930.10">
    <property type="entry name" value="Bira Bifunctional Protein, Domain 2"/>
    <property type="match status" value="1"/>
</dbReference>
<dbReference type="Gene3D" id="1.10.287.40">
    <property type="entry name" value="Serine-tRNA synthetase, tRNA binding domain"/>
    <property type="match status" value="1"/>
</dbReference>
<dbReference type="HAMAP" id="MF_00176">
    <property type="entry name" value="Ser_tRNA_synth_type1"/>
    <property type="match status" value="1"/>
</dbReference>
<dbReference type="InterPro" id="IPR002314">
    <property type="entry name" value="aa-tRNA-synt_IIb"/>
</dbReference>
<dbReference type="InterPro" id="IPR006195">
    <property type="entry name" value="aa-tRNA-synth_II"/>
</dbReference>
<dbReference type="InterPro" id="IPR045864">
    <property type="entry name" value="aa-tRNA-synth_II/BPL/LPL"/>
</dbReference>
<dbReference type="InterPro" id="IPR002317">
    <property type="entry name" value="Ser-tRNA-ligase_type_1"/>
</dbReference>
<dbReference type="InterPro" id="IPR015866">
    <property type="entry name" value="Ser-tRNA-synth_1_N"/>
</dbReference>
<dbReference type="InterPro" id="IPR042103">
    <property type="entry name" value="SerRS_1_N_sf"/>
</dbReference>
<dbReference type="InterPro" id="IPR033729">
    <property type="entry name" value="SerRS_core"/>
</dbReference>
<dbReference type="InterPro" id="IPR010978">
    <property type="entry name" value="tRNA-bd_arm"/>
</dbReference>
<dbReference type="NCBIfam" id="TIGR00414">
    <property type="entry name" value="serS"/>
    <property type="match status" value="1"/>
</dbReference>
<dbReference type="PANTHER" id="PTHR43697:SF1">
    <property type="entry name" value="SERINE--TRNA LIGASE"/>
    <property type="match status" value="1"/>
</dbReference>
<dbReference type="PANTHER" id="PTHR43697">
    <property type="entry name" value="SERYL-TRNA SYNTHETASE"/>
    <property type="match status" value="1"/>
</dbReference>
<dbReference type="Pfam" id="PF02403">
    <property type="entry name" value="Seryl_tRNA_N"/>
    <property type="match status" value="1"/>
</dbReference>
<dbReference type="Pfam" id="PF00587">
    <property type="entry name" value="tRNA-synt_2b"/>
    <property type="match status" value="1"/>
</dbReference>
<dbReference type="PIRSF" id="PIRSF001529">
    <property type="entry name" value="Ser-tRNA-synth_IIa"/>
    <property type="match status" value="1"/>
</dbReference>
<dbReference type="PRINTS" id="PR00981">
    <property type="entry name" value="TRNASYNTHSER"/>
</dbReference>
<dbReference type="SUPFAM" id="SSF55681">
    <property type="entry name" value="Class II aaRS and biotin synthetases"/>
    <property type="match status" value="1"/>
</dbReference>
<dbReference type="SUPFAM" id="SSF46589">
    <property type="entry name" value="tRNA-binding arm"/>
    <property type="match status" value="1"/>
</dbReference>
<dbReference type="PROSITE" id="PS50862">
    <property type="entry name" value="AA_TRNA_LIGASE_II"/>
    <property type="match status" value="1"/>
</dbReference>
<gene>
    <name evidence="1" type="primary">serS</name>
    <name type="ordered locus">COPRO5265_0687</name>
</gene>
<feature type="chain" id="PRO_1000098055" description="Serine--tRNA ligase">
    <location>
        <begin position="1"/>
        <end position="418"/>
    </location>
</feature>
<feature type="binding site" evidence="1">
    <location>
        <begin position="231"/>
        <end position="233"/>
    </location>
    <ligand>
        <name>L-serine</name>
        <dbReference type="ChEBI" id="CHEBI:33384"/>
    </ligand>
</feature>
<feature type="binding site" evidence="1">
    <location>
        <begin position="262"/>
        <end position="264"/>
    </location>
    <ligand>
        <name>ATP</name>
        <dbReference type="ChEBI" id="CHEBI:30616"/>
    </ligand>
</feature>
<feature type="binding site" evidence="1">
    <location>
        <position position="285"/>
    </location>
    <ligand>
        <name>L-serine</name>
        <dbReference type="ChEBI" id="CHEBI:33384"/>
    </ligand>
</feature>
<feature type="binding site" evidence="1">
    <location>
        <begin position="349"/>
        <end position="352"/>
    </location>
    <ligand>
        <name>ATP</name>
        <dbReference type="ChEBI" id="CHEBI:30616"/>
    </ligand>
</feature>
<feature type="binding site" evidence="1">
    <location>
        <position position="384"/>
    </location>
    <ligand>
        <name>L-serine</name>
        <dbReference type="ChEBI" id="CHEBI:33384"/>
    </ligand>
</feature>
<accession>B5Y8D8</accession>
<name>SYS_COPPD</name>
<sequence length="418" mass="47918">MYTLRFVRENENLMREALRKRQYDESIVDQLLAVDEQRRKEVTSLQELNTRRNELTSVVSKKKKDGTDASQEIELLKKLKEEVSVKETIVSELESKIQEILKQLPNIPHESVPTGKDSSENVEVRRWGEPRTFAFEPKPHWEIGENMNILDFQRAAKISGSRFVAYQGLGALLELTLINFMVWTHVKDHGYTFVIPPYLVKSDTAFGTGHLPKFKDEMYYCPEDDLYLIPTAELPMVAYHSGEVLVEAELPKRYVAYSACFRREAGAAGRDTRGLIRRHQFNKVELIKITKPEDSYNELESMVSDAESILQLLELPYRVVLLCTGDMGFAAAKTYDIEVWMPSYGRYVEISSCSNTEGFQARRANVRMRRPDGSNDYPHMLNGSGLAVGRTLAAIMENYQREDGTFDIPQALRAFMFA</sequence>
<comment type="function">
    <text evidence="1">Catalyzes the attachment of serine to tRNA(Ser). Is also able to aminoacylate tRNA(Sec) with serine, to form the misacylated tRNA L-seryl-tRNA(Sec), which will be further converted into selenocysteinyl-tRNA(Sec).</text>
</comment>
<comment type="catalytic activity">
    <reaction evidence="1">
        <text>tRNA(Ser) + L-serine + ATP = L-seryl-tRNA(Ser) + AMP + diphosphate + H(+)</text>
        <dbReference type="Rhea" id="RHEA:12292"/>
        <dbReference type="Rhea" id="RHEA-COMP:9669"/>
        <dbReference type="Rhea" id="RHEA-COMP:9703"/>
        <dbReference type="ChEBI" id="CHEBI:15378"/>
        <dbReference type="ChEBI" id="CHEBI:30616"/>
        <dbReference type="ChEBI" id="CHEBI:33019"/>
        <dbReference type="ChEBI" id="CHEBI:33384"/>
        <dbReference type="ChEBI" id="CHEBI:78442"/>
        <dbReference type="ChEBI" id="CHEBI:78533"/>
        <dbReference type="ChEBI" id="CHEBI:456215"/>
        <dbReference type="EC" id="6.1.1.11"/>
    </reaction>
</comment>
<comment type="catalytic activity">
    <reaction evidence="1">
        <text>tRNA(Sec) + L-serine + ATP = L-seryl-tRNA(Sec) + AMP + diphosphate + H(+)</text>
        <dbReference type="Rhea" id="RHEA:42580"/>
        <dbReference type="Rhea" id="RHEA-COMP:9742"/>
        <dbReference type="Rhea" id="RHEA-COMP:10128"/>
        <dbReference type="ChEBI" id="CHEBI:15378"/>
        <dbReference type="ChEBI" id="CHEBI:30616"/>
        <dbReference type="ChEBI" id="CHEBI:33019"/>
        <dbReference type="ChEBI" id="CHEBI:33384"/>
        <dbReference type="ChEBI" id="CHEBI:78442"/>
        <dbReference type="ChEBI" id="CHEBI:78533"/>
        <dbReference type="ChEBI" id="CHEBI:456215"/>
        <dbReference type="EC" id="6.1.1.11"/>
    </reaction>
</comment>
<comment type="pathway">
    <text evidence="1">Aminoacyl-tRNA biosynthesis; selenocysteinyl-tRNA(Sec) biosynthesis; L-seryl-tRNA(Sec) from L-serine and tRNA(Sec): step 1/1.</text>
</comment>
<comment type="subunit">
    <text evidence="1">Homodimer. The tRNA molecule binds across the dimer.</text>
</comment>
<comment type="subcellular location">
    <subcellularLocation>
        <location evidence="1">Cytoplasm</location>
    </subcellularLocation>
</comment>
<comment type="domain">
    <text evidence="1">Consists of two distinct domains, a catalytic core and a N-terminal extension that is involved in tRNA binding.</text>
</comment>
<comment type="similarity">
    <text evidence="1">Belongs to the class-II aminoacyl-tRNA synthetase family. Type-1 seryl-tRNA synthetase subfamily.</text>
</comment>
<protein>
    <recommendedName>
        <fullName evidence="1">Serine--tRNA ligase</fullName>
        <ecNumber evidence="1">6.1.1.11</ecNumber>
    </recommendedName>
    <alternativeName>
        <fullName evidence="1">Seryl-tRNA synthetase</fullName>
        <shortName evidence="1">SerRS</shortName>
    </alternativeName>
    <alternativeName>
        <fullName evidence="1">Seryl-tRNA(Ser/Sec) synthetase</fullName>
    </alternativeName>
</protein>
<evidence type="ECO:0000255" key="1">
    <source>
        <dbReference type="HAMAP-Rule" id="MF_00176"/>
    </source>
</evidence>
<proteinExistence type="inferred from homology"/>
<reference key="1">
    <citation type="submission" date="2008-08" db="EMBL/GenBank/DDBJ databases">
        <title>The complete genome sequence of Coprothermobacter proteolyticus strain ATCC 5245 / DSM 5265 / BT.</title>
        <authorList>
            <person name="Dodson R.J."/>
            <person name="Durkin A.S."/>
            <person name="Wu M."/>
            <person name="Eisen J."/>
            <person name="Sutton G."/>
        </authorList>
    </citation>
    <scope>NUCLEOTIDE SEQUENCE [LARGE SCALE GENOMIC DNA]</scope>
    <source>
        <strain>ATCC 35245 / DSM 5265 / OCM 4 / BT</strain>
    </source>
</reference>